<evidence type="ECO:0000250" key="1"/>
<evidence type="ECO:0000255" key="2"/>
<evidence type="ECO:0000305" key="3"/>
<keyword id="KW-0119">Carbohydrate metabolism</keyword>
<keyword id="KW-1015">Disulfide bond</keyword>
<keyword id="KW-0325">Glycoprotein</keyword>
<keyword id="KW-0326">Glycosidase</keyword>
<keyword id="KW-0378">Hydrolase</keyword>
<keyword id="KW-0624">Polysaccharide degradation</keyword>
<keyword id="KW-0964">Secreted</keyword>
<keyword id="KW-0732">Signal</keyword>
<feature type="signal peptide" evidence="2">
    <location>
        <begin position="1"/>
        <end position="22"/>
    </location>
</feature>
<feature type="chain" id="PRO_0000395224" description="Probable beta-galactosidase B">
    <location>
        <begin position="23"/>
        <end position="1020"/>
    </location>
</feature>
<feature type="active site" description="Proton donor" evidence="2">
    <location>
        <position position="196"/>
    </location>
</feature>
<feature type="active site" description="Nucleophile" evidence="2">
    <location>
        <position position="307"/>
    </location>
</feature>
<feature type="binding site" evidence="1">
    <location>
        <position position="90"/>
    </location>
    <ligand>
        <name>substrate</name>
    </ligand>
</feature>
<feature type="binding site" evidence="1">
    <location>
        <position position="135"/>
    </location>
    <ligand>
        <name>substrate</name>
    </ligand>
</feature>
<feature type="binding site" evidence="1">
    <location>
        <position position="136"/>
    </location>
    <ligand>
        <name>substrate</name>
    </ligand>
</feature>
<feature type="binding site" evidence="1">
    <location>
        <position position="137"/>
    </location>
    <ligand>
        <name>substrate</name>
    </ligand>
</feature>
<feature type="binding site" evidence="1">
    <location>
        <position position="195"/>
    </location>
    <ligand>
        <name>substrate</name>
    </ligand>
</feature>
<feature type="binding site" evidence="1">
    <location>
        <position position="264"/>
    </location>
    <ligand>
        <name>substrate</name>
    </ligand>
</feature>
<feature type="binding site" evidence="1">
    <location>
        <position position="372"/>
    </location>
    <ligand>
        <name>substrate</name>
    </ligand>
</feature>
<feature type="glycosylation site" description="N-linked (GlcNAc...) asparagine" evidence="2">
    <location>
        <position position="25"/>
    </location>
</feature>
<feature type="glycosylation site" description="N-linked (GlcNAc...) asparagine" evidence="2">
    <location>
        <position position="111"/>
    </location>
</feature>
<feature type="glycosylation site" description="N-linked (GlcNAc...) asparagine" evidence="2">
    <location>
        <position position="172"/>
    </location>
</feature>
<feature type="glycosylation site" description="N-linked (GlcNAc...) asparagine" evidence="2">
    <location>
        <position position="210"/>
    </location>
</feature>
<feature type="glycosylation site" description="N-linked (GlcNAc...) asparagine" evidence="2">
    <location>
        <position position="251"/>
    </location>
</feature>
<feature type="glycosylation site" description="N-linked (GlcNAc...) asparagine" evidence="2">
    <location>
        <position position="271"/>
    </location>
</feature>
<feature type="glycosylation site" description="N-linked (GlcNAc...) asparagine" evidence="2">
    <location>
        <position position="410"/>
    </location>
</feature>
<feature type="glycosylation site" description="N-linked (GlcNAc...) asparagine" evidence="2">
    <location>
        <position position="455"/>
    </location>
</feature>
<feature type="glycosylation site" description="N-linked (GlcNAc...) asparagine" evidence="2">
    <location>
        <position position="549"/>
    </location>
</feature>
<feature type="glycosylation site" description="N-linked (GlcNAc...) asparagine" evidence="2">
    <location>
        <position position="596"/>
    </location>
</feature>
<feature type="glycosylation site" description="N-linked (GlcNAc...) asparagine" evidence="2">
    <location>
        <position position="625"/>
    </location>
</feature>
<feature type="glycosylation site" description="N-linked (GlcNAc...) asparagine" evidence="2">
    <location>
        <position position="702"/>
    </location>
</feature>
<feature type="glycosylation site" description="N-linked (GlcNAc...) asparagine" evidence="2">
    <location>
        <position position="747"/>
    </location>
</feature>
<feature type="glycosylation site" description="N-linked (GlcNAc...) asparagine" evidence="2">
    <location>
        <position position="785"/>
    </location>
</feature>
<feature type="glycosylation site" description="N-linked (GlcNAc...) asparagine" evidence="2">
    <location>
        <position position="819"/>
    </location>
</feature>
<feature type="glycosylation site" description="N-linked (GlcNAc...) asparagine" evidence="2">
    <location>
        <position position="880"/>
    </location>
</feature>
<feature type="glycosylation site" description="N-linked (GlcNAc...) asparagine" evidence="2">
    <location>
        <position position="919"/>
    </location>
</feature>
<feature type="disulfide bond" evidence="1">
    <location>
        <begin position="270"/>
        <end position="323"/>
    </location>
</feature>
<reference key="1">
    <citation type="journal article" date="2015" name="Genome Announc.">
        <title>Genome sequence of Aspergillus flavus NRRL 3357, a strain that causes aflatoxin contamination of food and feed.</title>
        <authorList>
            <person name="Nierman W.C."/>
            <person name="Yu J."/>
            <person name="Fedorova-Abrams N.D."/>
            <person name="Losada L."/>
            <person name="Cleveland T.E."/>
            <person name="Bhatnagar D."/>
            <person name="Bennett J.W."/>
            <person name="Dean R."/>
            <person name="Payne G.A."/>
        </authorList>
    </citation>
    <scope>NUCLEOTIDE SEQUENCE [LARGE SCALE GENOMIC DNA]</scope>
    <source>
        <strain>ATCC 200026 / FGSC A1120 / IAM 13836 / NRRL 3357 / JCM 12722 / SRRC 167</strain>
    </source>
</reference>
<name>BGALB_ASPFN</name>
<comment type="function">
    <text evidence="1">Cleaves beta-linked terminal galactosyl residues from gangliosides, glycoproteins, and glycosaminoglycans.</text>
</comment>
<comment type="catalytic activity">
    <reaction>
        <text>Hydrolysis of terminal non-reducing beta-D-galactose residues in beta-D-galactosides.</text>
        <dbReference type="EC" id="3.2.1.23"/>
    </reaction>
</comment>
<comment type="subcellular location">
    <subcellularLocation>
        <location evidence="1">Secreted</location>
    </subcellularLocation>
</comment>
<comment type="similarity">
    <text evidence="3">Belongs to the glycosyl hydrolase 35 family.</text>
</comment>
<comment type="sequence caution" evidence="3">
    <conflict type="erroneous gene model prediction">
        <sequence resource="EMBL-CDS" id="EED49069"/>
    </conflict>
</comment>
<proteinExistence type="inferred from homology"/>
<accession>B8NKI4</accession>
<protein>
    <recommendedName>
        <fullName>Probable beta-galactosidase B</fullName>
        <ecNumber>3.2.1.23</ecNumber>
    </recommendedName>
    <alternativeName>
        <fullName>Lactase B</fullName>
    </alternativeName>
</protein>
<organism>
    <name type="scientific">Aspergillus flavus (strain ATCC 200026 / FGSC A1120 / IAM 13836 / NRRL 3357 / JCM 12722 / SRRC 167)</name>
    <dbReference type="NCBI Taxonomy" id="332952"/>
    <lineage>
        <taxon>Eukaryota</taxon>
        <taxon>Fungi</taxon>
        <taxon>Dikarya</taxon>
        <taxon>Ascomycota</taxon>
        <taxon>Pezizomycotina</taxon>
        <taxon>Eurotiomycetes</taxon>
        <taxon>Eurotiomycetidae</taxon>
        <taxon>Eurotiales</taxon>
        <taxon>Aspergillaceae</taxon>
        <taxon>Aspergillus</taxon>
        <taxon>Aspergillus subgen. Circumdati</taxon>
    </lineage>
</organism>
<gene>
    <name type="primary">lacB</name>
    <name type="ORF">AFLA_091500</name>
</gene>
<sequence>MLISKTVLSGLALGASFVGVSAQQNSTRWPLHDNGLTDTVEWDHYSFLINGQRHFVFSGEFHYWRIPVPELWRDLLEKIKAAGFTAFSIYNHWGYHSPKPGVLDFENGAHNFTSIMTLAKEIGLYMIIRPGPYVNAEANAGGLPLWTTTGAYGKLRDNDPRYLEALTPYWANISKIIAPHLITNGGNVILYQIENEYAEQWLDEETHEPNTSGQEYMQYLEDVARENGIDAPLIHNLPNMNGHSWSKDLSNATGNVDVIGVDSYPTCWTCNVSECASTNGEYIPYKTLIYYDYFKELSPTQPSFMPEFQGGSYNPWGGPQGGCPDDLGPDFANLFYRNLISQRVSAISLYMLYGGTNWGWHASTDVATSYDYSSPISENRKLIEKYYETKVLTQFTKIAQDLSKVDRLGNSTKYSSNPAVSVAELRNPDTGAAFYVTQHEYTPSGTVEKFTVKVNTSEGALTIPQYGSQITLNGHQSKIIVTDFKFGSKTLLYSTAEVLTYAVIDGKEVLALWVPTGESGEFTVKGVNSAKFADKGRTANIEIHPGANNVTVSFMQRSGMSLVELGDGTRIVLLDRSAAHVFWSTPLNNDPAEAGNNTVLVHGPYLVRSAKLEGCDLKLTGDIQNSTEVSIFAPKSVCSVNWNGKKTSVKSAKGGVITTTLGGDAKFELPTISGWKSADSLPEIAKDYSATSKAWVVATKTNSSNPTPPAPNNPVLYVDENDIHVGNHIYRATFPSTDEPPTDVYLNITGGRAFSYSVWLNSDFIGSWLGTATTEQNDQTFSFSNATLSTDEDNILVVVMDNSAHDLRDGALNPRGITNATLIGPGSYSFTEWKLAGNAGFEDHLDPVRAPLNEGSLYAERVGIHLPGYEFDEAEEVSSNSTSLTVPGAGIRVFRTVVPLSVPQGLDVSISFRLTAPSNVTFTSAEGYTNQLRALLFVNGYQYGRFNPYIGHQIDFPVPPGVLDYNGDNTIAVTVWSQSVDGAEIKVDWNVDYVHETSFDMNFDGAYLRPGWIEERREYA</sequence>
<dbReference type="EC" id="3.2.1.23"/>
<dbReference type="EMBL" id="EQ963480">
    <property type="protein sequence ID" value="EED49069.1"/>
    <property type="status" value="ALT_SEQ"/>
    <property type="molecule type" value="Genomic_DNA"/>
</dbReference>
<dbReference type="RefSeq" id="XP_002380970.1">
    <property type="nucleotide sequence ID" value="XM_002380929.1"/>
</dbReference>
<dbReference type="SMR" id="B8NKI4"/>
<dbReference type="STRING" id="332952.B8NKI4"/>
<dbReference type="GlyCosmos" id="B8NKI4">
    <property type="glycosylation" value="17 sites, No reported glycans"/>
</dbReference>
<dbReference type="VEuPathDB" id="FungiDB:AFLA_009378"/>
<dbReference type="eggNOG" id="KOG0496">
    <property type="taxonomic scope" value="Eukaryota"/>
</dbReference>
<dbReference type="GO" id="GO:0005576">
    <property type="term" value="C:extracellular region"/>
    <property type="evidence" value="ECO:0007669"/>
    <property type="project" value="UniProtKB-SubCell"/>
</dbReference>
<dbReference type="GO" id="GO:0004565">
    <property type="term" value="F:beta-galactosidase activity"/>
    <property type="evidence" value="ECO:0007669"/>
    <property type="project" value="UniProtKB-EC"/>
</dbReference>
<dbReference type="GO" id="GO:0000272">
    <property type="term" value="P:polysaccharide catabolic process"/>
    <property type="evidence" value="ECO:0007669"/>
    <property type="project" value="UniProtKB-KW"/>
</dbReference>
<dbReference type="FunFam" id="2.102.20.10:FF:000001">
    <property type="entry name" value="Beta-galactosidase A"/>
    <property type="match status" value="1"/>
</dbReference>
<dbReference type="FunFam" id="3.20.20.80:FF:000040">
    <property type="entry name" value="Beta-galactosidase A"/>
    <property type="match status" value="1"/>
</dbReference>
<dbReference type="Gene3D" id="2.102.20.10">
    <property type="entry name" value="Beta-galactosidase, domain 2"/>
    <property type="match status" value="1"/>
</dbReference>
<dbReference type="Gene3D" id="2.60.390.10">
    <property type="entry name" value="Beta-galactosidase, domain 3"/>
    <property type="match status" value="1"/>
</dbReference>
<dbReference type="Gene3D" id="2.60.120.260">
    <property type="entry name" value="Galactose-binding domain-like"/>
    <property type="match status" value="2"/>
</dbReference>
<dbReference type="Gene3D" id="3.20.20.80">
    <property type="entry name" value="Glycosidases"/>
    <property type="match status" value="1"/>
</dbReference>
<dbReference type="InterPro" id="IPR018954">
    <property type="entry name" value="Betagal_dom2"/>
</dbReference>
<dbReference type="InterPro" id="IPR037110">
    <property type="entry name" value="Betagal_dom2_sf"/>
</dbReference>
<dbReference type="InterPro" id="IPR025972">
    <property type="entry name" value="BetaGal_dom3"/>
</dbReference>
<dbReference type="InterPro" id="IPR036833">
    <property type="entry name" value="BetaGal_dom3_sf"/>
</dbReference>
<dbReference type="InterPro" id="IPR025300">
    <property type="entry name" value="BetaGal_jelly_roll_dom"/>
</dbReference>
<dbReference type="InterPro" id="IPR008979">
    <property type="entry name" value="Galactose-bd-like_sf"/>
</dbReference>
<dbReference type="InterPro" id="IPR031330">
    <property type="entry name" value="Gly_Hdrlase_35_cat"/>
</dbReference>
<dbReference type="InterPro" id="IPR001944">
    <property type="entry name" value="Glycoside_Hdrlase_35"/>
</dbReference>
<dbReference type="InterPro" id="IPR017853">
    <property type="entry name" value="Glycoside_hydrolase_SF"/>
</dbReference>
<dbReference type="PANTHER" id="PTHR23421">
    <property type="entry name" value="BETA-GALACTOSIDASE RELATED"/>
    <property type="match status" value="1"/>
</dbReference>
<dbReference type="Pfam" id="PF13364">
    <property type="entry name" value="BetaGal_ABD2"/>
    <property type="match status" value="2"/>
</dbReference>
<dbReference type="Pfam" id="PF10435">
    <property type="entry name" value="BetaGal_dom2"/>
    <property type="match status" value="1"/>
</dbReference>
<dbReference type="Pfam" id="PF13363">
    <property type="entry name" value="BetaGal_dom3"/>
    <property type="match status" value="1"/>
</dbReference>
<dbReference type="Pfam" id="PF01301">
    <property type="entry name" value="Glyco_hydro_35"/>
    <property type="match status" value="1"/>
</dbReference>
<dbReference type="PRINTS" id="PR00742">
    <property type="entry name" value="GLHYDRLASE35"/>
</dbReference>
<dbReference type="SMART" id="SM01029">
    <property type="entry name" value="BetaGal_dom2"/>
    <property type="match status" value="1"/>
</dbReference>
<dbReference type="SUPFAM" id="SSF51445">
    <property type="entry name" value="(Trans)glycosidases"/>
    <property type="match status" value="1"/>
</dbReference>
<dbReference type="SUPFAM" id="SSF117100">
    <property type="entry name" value="Beta-galactosidase LacA, domain 3"/>
    <property type="match status" value="1"/>
</dbReference>
<dbReference type="SUPFAM" id="SSF49785">
    <property type="entry name" value="Galactose-binding domain-like"/>
    <property type="match status" value="2"/>
</dbReference>
<dbReference type="SUPFAM" id="SSF51011">
    <property type="entry name" value="Glycosyl hydrolase domain"/>
    <property type="match status" value="1"/>
</dbReference>